<gene>
    <name evidence="1" type="primary">rplO</name>
    <name type="ordered locus">A1S_3062</name>
</gene>
<organism>
    <name type="scientific">Acinetobacter baumannii (strain ATCC 17978 / DSM 105126 / CIP 53.77 / LMG 1025 / NCDC KC755 / 5377)</name>
    <dbReference type="NCBI Taxonomy" id="400667"/>
    <lineage>
        <taxon>Bacteria</taxon>
        <taxon>Pseudomonadati</taxon>
        <taxon>Pseudomonadota</taxon>
        <taxon>Gammaproteobacteria</taxon>
        <taxon>Moraxellales</taxon>
        <taxon>Moraxellaceae</taxon>
        <taxon>Acinetobacter</taxon>
        <taxon>Acinetobacter calcoaceticus/baumannii complex</taxon>
    </lineage>
</organism>
<comment type="function">
    <text evidence="1">Binds to the 23S rRNA.</text>
</comment>
<comment type="subunit">
    <text evidence="1">Part of the 50S ribosomal subunit.</text>
</comment>
<comment type="similarity">
    <text evidence="1">Belongs to the universal ribosomal protein uL15 family.</text>
</comment>
<protein>
    <recommendedName>
        <fullName evidence="1">Large ribosomal subunit protein uL15</fullName>
    </recommendedName>
    <alternativeName>
        <fullName evidence="3">50S ribosomal protein L15</fullName>
    </alternativeName>
</protein>
<reference key="1">
    <citation type="journal article" date="2007" name="Genes Dev.">
        <title>New insights into Acinetobacter baumannii pathogenesis revealed by high-density pyrosequencing and transposon mutagenesis.</title>
        <authorList>
            <person name="Smith M.G."/>
            <person name="Gianoulis T.A."/>
            <person name="Pukatzki S."/>
            <person name="Mekalanos J.J."/>
            <person name="Ornston L.N."/>
            <person name="Gerstein M."/>
            <person name="Snyder M."/>
        </authorList>
    </citation>
    <scope>NUCLEOTIDE SEQUENCE [LARGE SCALE GENOMIC DNA]</scope>
    <source>
        <strain>ATCC 17978 / DSM 105126 / CIP 53.77 / LMG 1025 / NCDC KC755 / 5377</strain>
    </source>
</reference>
<keyword id="KW-0687">Ribonucleoprotein</keyword>
<keyword id="KW-0689">Ribosomal protein</keyword>
<keyword id="KW-0694">RNA-binding</keyword>
<keyword id="KW-0699">rRNA-binding</keyword>
<proteinExistence type="inferred from homology"/>
<sequence length="146" mass="15481">MTLRLNELAPAEGAKREHRRLGRGIGSGVGKTGGRGIKGQKSRKSGGVRPGFEGGQTAIYRRLPKFGFTSQIALKTAEVRLSELSKVEGDIVSLETLKAANVVRRDQIRARIVLSGEITRAFTVQGVALTKGAKAAIEAAGGKVEE</sequence>
<feature type="chain" id="PRO_1000054416" description="Large ribosomal subunit protein uL15">
    <location>
        <begin position="1"/>
        <end position="146"/>
    </location>
</feature>
<feature type="region of interest" description="Disordered" evidence="2">
    <location>
        <begin position="1"/>
        <end position="54"/>
    </location>
</feature>
<feature type="compositionally biased region" description="Gly residues" evidence="2">
    <location>
        <begin position="23"/>
        <end position="37"/>
    </location>
</feature>
<accession>A3M965</accession>
<dbReference type="EMBL" id="CP000521">
    <property type="protein sequence ID" value="ABO13459.1"/>
    <property type="molecule type" value="Genomic_DNA"/>
</dbReference>
<dbReference type="RefSeq" id="WP_000175340.1">
    <property type="nucleotide sequence ID" value="NZ_CP053098.1"/>
</dbReference>
<dbReference type="SMR" id="A3M965"/>
<dbReference type="GeneID" id="92895298"/>
<dbReference type="KEGG" id="acb:A1S_3062"/>
<dbReference type="HOGENOM" id="CLU_055188_4_2_6"/>
<dbReference type="GO" id="GO:0022625">
    <property type="term" value="C:cytosolic large ribosomal subunit"/>
    <property type="evidence" value="ECO:0007669"/>
    <property type="project" value="TreeGrafter"/>
</dbReference>
<dbReference type="GO" id="GO:0019843">
    <property type="term" value="F:rRNA binding"/>
    <property type="evidence" value="ECO:0007669"/>
    <property type="project" value="UniProtKB-UniRule"/>
</dbReference>
<dbReference type="GO" id="GO:0003735">
    <property type="term" value="F:structural constituent of ribosome"/>
    <property type="evidence" value="ECO:0007669"/>
    <property type="project" value="InterPro"/>
</dbReference>
<dbReference type="GO" id="GO:0006412">
    <property type="term" value="P:translation"/>
    <property type="evidence" value="ECO:0007669"/>
    <property type="project" value="UniProtKB-UniRule"/>
</dbReference>
<dbReference type="Gene3D" id="3.100.10.10">
    <property type="match status" value="1"/>
</dbReference>
<dbReference type="HAMAP" id="MF_01341">
    <property type="entry name" value="Ribosomal_uL15"/>
    <property type="match status" value="1"/>
</dbReference>
<dbReference type="InterPro" id="IPR030878">
    <property type="entry name" value="Ribosomal_uL15"/>
</dbReference>
<dbReference type="InterPro" id="IPR021131">
    <property type="entry name" value="Ribosomal_uL15/eL18"/>
</dbReference>
<dbReference type="InterPro" id="IPR036227">
    <property type="entry name" value="Ribosomal_uL15/eL18_sf"/>
</dbReference>
<dbReference type="InterPro" id="IPR005749">
    <property type="entry name" value="Ribosomal_uL15_bac-type"/>
</dbReference>
<dbReference type="InterPro" id="IPR001196">
    <property type="entry name" value="Ribosomal_uL15_CS"/>
</dbReference>
<dbReference type="NCBIfam" id="TIGR01071">
    <property type="entry name" value="rplO_bact"/>
    <property type="match status" value="1"/>
</dbReference>
<dbReference type="PANTHER" id="PTHR12934">
    <property type="entry name" value="50S RIBOSOMAL PROTEIN L15"/>
    <property type="match status" value="1"/>
</dbReference>
<dbReference type="PANTHER" id="PTHR12934:SF11">
    <property type="entry name" value="LARGE RIBOSOMAL SUBUNIT PROTEIN UL15M"/>
    <property type="match status" value="1"/>
</dbReference>
<dbReference type="Pfam" id="PF00828">
    <property type="entry name" value="Ribosomal_L27A"/>
    <property type="match status" value="1"/>
</dbReference>
<dbReference type="SUPFAM" id="SSF52080">
    <property type="entry name" value="Ribosomal proteins L15p and L18e"/>
    <property type="match status" value="1"/>
</dbReference>
<dbReference type="PROSITE" id="PS00475">
    <property type="entry name" value="RIBOSOMAL_L15"/>
    <property type="match status" value="1"/>
</dbReference>
<evidence type="ECO:0000255" key="1">
    <source>
        <dbReference type="HAMAP-Rule" id="MF_01341"/>
    </source>
</evidence>
<evidence type="ECO:0000256" key="2">
    <source>
        <dbReference type="SAM" id="MobiDB-lite"/>
    </source>
</evidence>
<evidence type="ECO:0000305" key="3"/>
<name>RL15_ACIBT</name>